<evidence type="ECO:0000255" key="1">
    <source>
        <dbReference type="HAMAP-Rule" id="MF_00382"/>
    </source>
</evidence>
<evidence type="ECO:0000305" key="2"/>
<name>RL20_BURTA</name>
<feature type="chain" id="PRO_0000243665" description="Large ribosomal subunit protein bL20">
    <location>
        <begin position="1"/>
        <end position="119"/>
    </location>
</feature>
<organism>
    <name type="scientific">Burkholderia thailandensis (strain ATCC 700388 / DSM 13276 / CCUG 48851 / CIP 106301 / E264)</name>
    <dbReference type="NCBI Taxonomy" id="271848"/>
    <lineage>
        <taxon>Bacteria</taxon>
        <taxon>Pseudomonadati</taxon>
        <taxon>Pseudomonadota</taxon>
        <taxon>Betaproteobacteria</taxon>
        <taxon>Burkholderiales</taxon>
        <taxon>Burkholderiaceae</taxon>
        <taxon>Burkholderia</taxon>
        <taxon>pseudomallei group</taxon>
    </lineage>
</organism>
<protein>
    <recommendedName>
        <fullName evidence="1">Large ribosomal subunit protein bL20</fullName>
    </recommendedName>
    <alternativeName>
        <fullName evidence="2">50S ribosomal protein L20</fullName>
    </alternativeName>
</protein>
<dbReference type="EMBL" id="CP000086">
    <property type="protein sequence ID" value="ABC38734.1"/>
    <property type="molecule type" value="Genomic_DNA"/>
</dbReference>
<dbReference type="RefSeq" id="WP_004192938.1">
    <property type="nucleotide sequence ID" value="NZ_CP008785.1"/>
</dbReference>
<dbReference type="SMR" id="Q2SVE1"/>
<dbReference type="GeneID" id="98102114"/>
<dbReference type="KEGG" id="bte:BTH_I2592"/>
<dbReference type="HOGENOM" id="CLU_123265_0_1_4"/>
<dbReference type="Proteomes" id="UP000001930">
    <property type="component" value="Chromosome I"/>
</dbReference>
<dbReference type="GO" id="GO:1990904">
    <property type="term" value="C:ribonucleoprotein complex"/>
    <property type="evidence" value="ECO:0007669"/>
    <property type="project" value="UniProtKB-KW"/>
</dbReference>
<dbReference type="GO" id="GO:0005840">
    <property type="term" value="C:ribosome"/>
    <property type="evidence" value="ECO:0007669"/>
    <property type="project" value="UniProtKB-KW"/>
</dbReference>
<dbReference type="GO" id="GO:0019843">
    <property type="term" value="F:rRNA binding"/>
    <property type="evidence" value="ECO:0007669"/>
    <property type="project" value="UniProtKB-UniRule"/>
</dbReference>
<dbReference type="GO" id="GO:0003735">
    <property type="term" value="F:structural constituent of ribosome"/>
    <property type="evidence" value="ECO:0007669"/>
    <property type="project" value="InterPro"/>
</dbReference>
<dbReference type="GO" id="GO:0000027">
    <property type="term" value="P:ribosomal large subunit assembly"/>
    <property type="evidence" value="ECO:0007669"/>
    <property type="project" value="UniProtKB-UniRule"/>
</dbReference>
<dbReference type="GO" id="GO:0006412">
    <property type="term" value="P:translation"/>
    <property type="evidence" value="ECO:0007669"/>
    <property type="project" value="InterPro"/>
</dbReference>
<dbReference type="CDD" id="cd07026">
    <property type="entry name" value="Ribosomal_L20"/>
    <property type="match status" value="1"/>
</dbReference>
<dbReference type="FunFam" id="1.10.1900.20:FF:000001">
    <property type="entry name" value="50S ribosomal protein L20"/>
    <property type="match status" value="1"/>
</dbReference>
<dbReference type="Gene3D" id="6.10.160.10">
    <property type="match status" value="1"/>
</dbReference>
<dbReference type="Gene3D" id="1.10.1900.20">
    <property type="entry name" value="Ribosomal protein L20"/>
    <property type="match status" value="1"/>
</dbReference>
<dbReference type="HAMAP" id="MF_00382">
    <property type="entry name" value="Ribosomal_bL20"/>
    <property type="match status" value="1"/>
</dbReference>
<dbReference type="InterPro" id="IPR005813">
    <property type="entry name" value="Ribosomal_bL20"/>
</dbReference>
<dbReference type="InterPro" id="IPR049946">
    <property type="entry name" value="RIBOSOMAL_L20_CS"/>
</dbReference>
<dbReference type="InterPro" id="IPR035566">
    <property type="entry name" value="Ribosomal_protein_bL20_C"/>
</dbReference>
<dbReference type="NCBIfam" id="TIGR01032">
    <property type="entry name" value="rplT_bact"/>
    <property type="match status" value="1"/>
</dbReference>
<dbReference type="PANTHER" id="PTHR10986">
    <property type="entry name" value="39S RIBOSOMAL PROTEIN L20"/>
    <property type="match status" value="1"/>
</dbReference>
<dbReference type="Pfam" id="PF00453">
    <property type="entry name" value="Ribosomal_L20"/>
    <property type="match status" value="1"/>
</dbReference>
<dbReference type="PRINTS" id="PR00062">
    <property type="entry name" value="RIBOSOMALL20"/>
</dbReference>
<dbReference type="SUPFAM" id="SSF74731">
    <property type="entry name" value="Ribosomal protein L20"/>
    <property type="match status" value="1"/>
</dbReference>
<dbReference type="PROSITE" id="PS00937">
    <property type="entry name" value="RIBOSOMAL_L20"/>
    <property type="match status" value="1"/>
</dbReference>
<gene>
    <name evidence="1" type="primary">rplT</name>
    <name type="ordered locus">BTH_I2592</name>
</gene>
<sequence>MPRVKRGVTARARHKKIINLAKGYRGRRNNVYRIAKQAVMRAGQYAYRDRRNKKRVFRALWITRINAAVRQHDMTYSVFINGLKKASIELDRKVLADMAVFDKAAFAAIVKQVKAAVAA</sequence>
<proteinExistence type="inferred from homology"/>
<comment type="function">
    <text evidence="1">Binds directly to 23S ribosomal RNA and is necessary for the in vitro assembly process of the 50S ribosomal subunit. It is not involved in the protein synthesizing functions of that subunit.</text>
</comment>
<comment type="similarity">
    <text evidence="1">Belongs to the bacterial ribosomal protein bL20 family.</text>
</comment>
<accession>Q2SVE1</accession>
<reference key="1">
    <citation type="journal article" date="2005" name="BMC Genomics">
        <title>Bacterial genome adaptation to niches: divergence of the potential virulence genes in three Burkholderia species of different survival strategies.</title>
        <authorList>
            <person name="Kim H.S."/>
            <person name="Schell M.A."/>
            <person name="Yu Y."/>
            <person name="Ulrich R.L."/>
            <person name="Sarria S.H."/>
            <person name="Nierman W.C."/>
            <person name="DeShazer D."/>
        </authorList>
    </citation>
    <scope>NUCLEOTIDE SEQUENCE [LARGE SCALE GENOMIC DNA]</scope>
    <source>
        <strain>ATCC 700388 / DSM 13276 / CCUG 48851 / CIP 106301 / E264</strain>
    </source>
</reference>
<keyword id="KW-0687">Ribonucleoprotein</keyword>
<keyword id="KW-0689">Ribosomal protein</keyword>
<keyword id="KW-0694">RNA-binding</keyword>
<keyword id="KW-0699">rRNA-binding</keyword>